<reference key="1">
    <citation type="journal article" date="2002" name="Proc. Natl. Acad. Sci. U.S.A.">
        <title>Extensive mosaic structure revealed by the complete genome sequence of uropathogenic Escherichia coli.</title>
        <authorList>
            <person name="Welch R.A."/>
            <person name="Burland V."/>
            <person name="Plunkett G. III"/>
            <person name="Redford P."/>
            <person name="Roesch P."/>
            <person name="Rasko D."/>
            <person name="Buckles E.L."/>
            <person name="Liou S.-R."/>
            <person name="Boutin A."/>
            <person name="Hackett J."/>
            <person name="Stroud D."/>
            <person name="Mayhew G.F."/>
            <person name="Rose D.J."/>
            <person name="Zhou S."/>
            <person name="Schwartz D.C."/>
            <person name="Perna N.T."/>
            <person name="Mobley H.L.T."/>
            <person name="Donnenberg M.S."/>
            <person name="Blattner F.R."/>
        </authorList>
    </citation>
    <scope>NUCLEOTIDE SEQUENCE [LARGE SCALE GENOMIC DNA]</scope>
    <source>
        <strain>CFT073 / ATCC 700928 / UPEC</strain>
    </source>
</reference>
<organism>
    <name type="scientific">Escherichia coli O6:H1 (strain CFT073 / ATCC 700928 / UPEC)</name>
    <dbReference type="NCBI Taxonomy" id="199310"/>
    <lineage>
        <taxon>Bacteria</taxon>
        <taxon>Pseudomonadati</taxon>
        <taxon>Pseudomonadota</taxon>
        <taxon>Gammaproteobacteria</taxon>
        <taxon>Enterobacterales</taxon>
        <taxon>Enterobacteriaceae</taxon>
        <taxon>Escherichia</taxon>
    </lineage>
</organism>
<keyword id="KW-0963">Cytoplasm</keyword>
<keyword id="KW-0255">Endonuclease</keyword>
<keyword id="KW-0378">Hydrolase</keyword>
<keyword id="KW-0479">Metal-binding</keyword>
<keyword id="KW-0540">Nuclease</keyword>
<keyword id="KW-1185">Reference proteome</keyword>
<keyword id="KW-0690">Ribosome biogenesis</keyword>
<keyword id="KW-0698">rRNA processing</keyword>
<keyword id="KW-0862">Zinc</keyword>
<proteinExistence type="inferred from homology"/>
<gene>
    <name evidence="1" type="primary">ybeY</name>
    <name type="ordered locus">c0744</name>
</gene>
<sequence length="155" mass="17526">MSQVILDLQLACEDNSGLPEESQFQTWLNAVIPQFQEESEVTIRVVDTAESHSLNLTYRGKDKPTNVLSFPFEVPPGMEMSLLGDLVICRQVVEKEAQEQGKPLEAHWAHMVVHGSLHLLGYDHIEDDEAEEMEAIETEIMLALGYEDPYIAEKE</sequence>
<name>YBEY_ECOL6</name>
<feature type="chain" id="PRO_0000102451" description="Endoribonuclease YbeY">
    <location>
        <begin position="1"/>
        <end position="155"/>
    </location>
</feature>
<feature type="binding site" evidence="1">
    <location>
        <position position="114"/>
    </location>
    <ligand>
        <name>Zn(2+)</name>
        <dbReference type="ChEBI" id="CHEBI:29105"/>
        <note>catalytic</note>
    </ligand>
</feature>
<feature type="binding site" evidence="1">
    <location>
        <position position="118"/>
    </location>
    <ligand>
        <name>Zn(2+)</name>
        <dbReference type="ChEBI" id="CHEBI:29105"/>
        <note>catalytic</note>
    </ligand>
</feature>
<feature type="binding site" evidence="1">
    <location>
        <position position="124"/>
    </location>
    <ligand>
        <name>Zn(2+)</name>
        <dbReference type="ChEBI" id="CHEBI:29105"/>
        <note>catalytic</note>
    </ligand>
</feature>
<evidence type="ECO:0000255" key="1">
    <source>
        <dbReference type="HAMAP-Rule" id="MF_00009"/>
    </source>
</evidence>
<dbReference type="EC" id="3.1.-.-" evidence="1"/>
<dbReference type="EMBL" id="AE014075">
    <property type="protein sequence ID" value="AAN79217.1"/>
    <property type="molecule type" value="Genomic_DNA"/>
</dbReference>
<dbReference type="RefSeq" id="WP_000084467.1">
    <property type="nucleotide sequence ID" value="NZ_CP051263.1"/>
</dbReference>
<dbReference type="SMR" id="Q8FJY3"/>
<dbReference type="STRING" id="199310.c0744"/>
<dbReference type="KEGG" id="ecc:c0744"/>
<dbReference type="eggNOG" id="COG0319">
    <property type="taxonomic scope" value="Bacteria"/>
</dbReference>
<dbReference type="HOGENOM" id="CLU_106710_0_1_6"/>
<dbReference type="BioCyc" id="ECOL199310:C0744-MONOMER"/>
<dbReference type="Proteomes" id="UP000001410">
    <property type="component" value="Chromosome"/>
</dbReference>
<dbReference type="GO" id="GO:0005737">
    <property type="term" value="C:cytoplasm"/>
    <property type="evidence" value="ECO:0007669"/>
    <property type="project" value="UniProtKB-SubCell"/>
</dbReference>
<dbReference type="GO" id="GO:0004222">
    <property type="term" value="F:metalloendopeptidase activity"/>
    <property type="evidence" value="ECO:0007669"/>
    <property type="project" value="InterPro"/>
</dbReference>
<dbReference type="GO" id="GO:0004521">
    <property type="term" value="F:RNA endonuclease activity"/>
    <property type="evidence" value="ECO:0007669"/>
    <property type="project" value="UniProtKB-UniRule"/>
</dbReference>
<dbReference type="GO" id="GO:0008270">
    <property type="term" value="F:zinc ion binding"/>
    <property type="evidence" value="ECO:0007669"/>
    <property type="project" value="UniProtKB-UniRule"/>
</dbReference>
<dbReference type="GO" id="GO:0006364">
    <property type="term" value="P:rRNA processing"/>
    <property type="evidence" value="ECO:0007669"/>
    <property type="project" value="UniProtKB-UniRule"/>
</dbReference>
<dbReference type="FunFam" id="3.40.390.30:FF:000001">
    <property type="entry name" value="Endoribonuclease YbeY"/>
    <property type="match status" value="1"/>
</dbReference>
<dbReference type="Gene3D" id="3.40.390.30">
    <property type="entry name" value="Metalloproteases ('zincins'), catalytic domain"/>
    <property type="match status" value="1"/>
</dbReference>
<dbReference type="HAMAP" id="MF_00009">
    <property type="entry name" value="Endoribonucl_YbeY"/>
    <property type="match status" value="1"/>
</dbReference>
<dbReference type="InterPro" id="IPR023091">
    <property type="entry name" value="MetalPrtase_cat_dom_sf_prd"/>
</dbReference>
<dbReference type="InterPro" id="IPR002036">
    <property type="entry name" value="YbeY"/>
</dbReference>
<dbReference type="InterPro" id="IPR020549">
    <property type="entry name" value="YbeY_CS"/>
</dbReference>
<dbReference type="NCBIfam" id="TIGR00043">
    <property type="entry name" value="rRNA maturation RNase YbeY"/>
    <property type="match status" value="1"/>
</dbReference>
<dbReference type="PANTHER" id="PTHR46986">
    <property type="entry name" value="ENDORIBONUCLEASE YBEY, CHLOROPLASTIC"/>
    <property type="match status" value="1"/>
</dbReference>
<dbReference type="PANTHER" id="PTHR46986:SF1">
    <property type="entry name" value="ENDORIBONUCLEASE YBEY, CHLOROPLASTIC"/>
    <property type="match status" value="1"/>
</dbReference>
<dbReference type="Pfam" id="PF02130">
    <property type="entry name" value="YbeY"/>
    <property type="match status" value="1"/>
</dbReference>
<dbReference type="SUPFAM" id="SSF55486">
    <property type="entry name" value="Metalloproteases ('zincins'), catalytic domain"/>
    <property type="match status" value="1"/>
</dbReference>
<dbReference type="PROSITE" id="PS01306">
    <property type="entry name" value="UPF0054"/>
    <property type="match status" value="1"/>
</dbReference>
<protein>
    <recommendedName>
        <fullName evidence="1">Endoribonuclease YbeY</fullName>
        <ecNumber evidence="1">3.1.-.-</ecNumber>
    </recommendedName>
</protein>
<accession>Q8FJY3</accession>
<comment type="function">
    <text evidence="1">Single strand-specific metallo-endoribonuclease involved in late-stage 70S ribosome quality control and in maturation of the 3' terminus of the 16S rRNA.</text>
</comment>
<comment type="cofactor">
    <cofactor evidence="1">
        <name>Zn(2+)</name>
        <dbReference type="ChEBI" id="CHEBI:29105"/>
    </cofactor>
    <text evidence="1">Binds 1 zinc ion.</text>
</comment>
<comment type="subcellular location">
    <subcellularLocation>
        <location evidence="1">Cytoplasm</location>
    </subcellularLocation>
</comment>
<comment type="similarity">
    <text evidence="1">Belongs to the endoribonuclease YbeY family.</text>
</comment>